<sequence length="86" mass="9359">MNSKIFAVLFLLAFLSCVLSDQYCPKSSITACKKMNIRNDCCKDDDCTGGSWCCATPCGNFCKYPTDRPGGKRAAGGKSCKTSYVY</sequence>
<organism>
    <name type="scientific">Lycosa singoriensis</name>
    <name type="common">Wolf spider</name>
    <name type="synonym">Aranea singoriensis</name>
    <dbReference type="NCBI Taxonomy" id="434756"/>
    <lineage>
        <taxon>Eukaryota</taxon>
        <taxon>Metazoa</taxon>
        <taxon>Ecdysozoa</taxon>
        <taxon>Arthropoda</taxon>
        <taxon>Chelicerata</taxon>
        <taxon>Arachnida</taxon>
        <taxon>Araneae</taxon>
        <taxon>Araneomorphae</taxon>
        <taxon>Entelegynae</taxon>
        <taxon>Lycosoidea</taxon>
        <taxon>Lycosidae</taxon>
        <taxon>Lycosa</taxon>
    </lineage>
</organism>
<name>TXF10_LYCSI</name>
<proteinExistence type="evidence at transcript level"/>
<comment type="function">
    <text evidence="1">Has antibacterial activity.</text>
</comment>
<comment type="subcellular location">
    <subcellularLocation>
        <location evidence="1">Secreted</location>
    </subcellularLocation>
</comment>
<comment type="tissue specificity">
    <text>Expressed by the venom gland.</text>
</comment>
<comment type="PTM">
    <text evidence="3">Contains 5 disulfide bonds.</text>
</comment>
<comment type="similarity">
    <text evidence="3">Belongs to the venom protein 11 family. 01 (wap-1) subfamily.</text>
</comment>
<accession>B6DD43</accession>
<feature type="signal peptide" evidence="2">
    <location>
        <begin position="1"/>
        <end position="20"/>
    </location>
</feature>
<feature type="chain" id="PRO_0000401886" description="U15-lycotoxin-Ls1a">
    <location>
        <begin position="21"/>
        <end position="86"/>
    </location>
</feature>
<feature type="domain" description="WAP">
    <location>
        <begin position="21"/>
        <end position="66"/>
    </location>
</feature>
<feature type="disulfide bond" evidence="1">
    <location>
        <begin position="24"/>
        <end position="54"/>
    </location>
</feature>
<feature type="disulfide bond" evidence="1">
    <location>
        <begin position="32"/>
        <end position="58"/>
    </location>
</feature>
<feature type="disulfide bond" evidence="1">
    <location>
        <begin position="41"/>
        <end position="53"/>
    </location>
</feature>
<feature type="disulfide bond" evidence="3">
    <location>
        <begin position="42"/>
        <end position="80"/>
    </location>
</feature>
<feature type="disulfide bond" evidence="1">
    <location>
        <begin position="47"/>
        <end position="62"/>
    </location>
</feature>
<reference key="1">
    <citation type="journal article" date="2010" name="Zoology">
        <title>Transcriptome analysis of the venom glands of the Chinese wolf spider Lycosa singoriensis.</title>
        <authorList>
            <person name="Zhang Y."/>
            <person name="Chen J."/>
            <person name="Tang X."/>
            <person name="Wang F."/>
            <person name="Jiang L."/>
            <person name="Xiong X."/>
            <person name="Wang M."/>
            <person name="Rong M."/>
            <person name="Liu Z."/>
            <person name="Liang S."/>
        </authorList>
    </citation>
    <scope>NUCLEOTIDE SEQUENCE [LARGE SCALE MRNA]</scope>
    <source>
        <tissue>Venom gland</tissue>
    </source>
</reference>
<dbReference type="EMBL" id="EU926127">
    <property type="protein sequence ID" value="ACI41459.1"/>
    <property type="molecule type" value="mRNA"/>
</dbReference>
<dbReference type="EMBL" id="FM864131">
    <property type="protein sequence ID" value="CAS03728.1"/>
    <property type="molecule type" value="mRNA"/>
</dbReference>
<dbReference type="SMR" id="B6DD43"/>
<dbReference type="ArachnoServer" id="AS001066">
    <property type="toxin name" value="U15-lycotoxin-Ls1a"/>
</dbReference>
<dbReference type="GO" id="GO:0005576">
    <property type="term" value="C:extracellular region"/>
    <property type="evidence" value="ECO:0007669"/>
    <property type="project" value="UniProtKB-SubCell"/>
</dbReference>
<dbReference type="GO" id="GO:0090729">
    <property type="term" value="F:toxin activity"/>
    <property type="evidence" value="ECO:0007669"/>
    <property type="project" value="UniProtKB-KW"/>
</dbReference>
<dbReference type="GO" id="GO:0042742">
    <property type="term" value="P:defense response to bacterium"/>
    <property type="evidence" value="ECO:0007669"/>
    <property type="project" value="UniProtKB-KW"/>
</dbReference>
<dbReference type="InterPro" id="IPR036645">
    <property type="entry name" value="Elafin-like_sf"/>
</dbReference>
<dbReference type="SUPFAM" id="SSF57256">
    <property type="entry name" value="Elafin-like"/>
    <property type="match status" value="1"/>
</dbReference>
<evidence type="ECO:0000250" key="1"/>
<evidence type="ECO:0000255" key="2"/>
<evidence type="ECO:0000305" key="3"/>
<protein>
    <recommendedName>
        <fullName>U15-lycotoxin-Ls1a</fullName>
    </recommendedName>
    <alternativeName>
        <fullName>Toxin-like structure LSTX-N10</fullName>
    </alternativeName>
</protein>
<keyword id="KW-0044">Antibiotic</keyword>
<keyword id="KW-0929">Antimicrobial</keyword>
<keyword id="KW-1015">Disulfide bond</keyword>
<keyword id="KW-0964">Secreted</keyword>
<keyword id="KW-0732">Signal</keyword>
<keyword id="KW-0800">Toxin</keyword>